<keyword id="KW-0002">3D-structure</keyword>
<keyword id="KW-0028">Amino-acid biosynthesis</keyword>
<keyword id="KW-0055">Arginine biosynthesis</keyword>
<keyword id="KW-0067">ATP-binding</keyword>
<keyword id="KW-0963">Cytoplasm</keyword>
<keyword id="KW-0436">Ligase</keyword>
<keyword id="KW-0547">Nucleotide-binding</keyword>
<keyword id="KW-1185">Reference proteome</keyword>
<reference key="1">
    <citation type="journal article" date="2003" name="Nat. Genet.">
        <title>Comparative analysis of the genome sequences of Bordetella pertussis, Bordetella parapertussis and Bordetella bronchiseptica.</title>
        <authorList>
            <person name="Parkhill J."/>
            <person name="Sebaihia M."/>
            <person name="Preston A."/>
            <person name="Murphy L.D."/>
            <person name="Thomson N.R."/>
            <person name="Harris D.E."/>
            <person name="Holden M.T.G."/>
            <person name="Churcher C.M."/>
            <person name="Bentley S.D."/>
            <person name="Mungall K.L."/>
            <person name="Cerdeno-Tarraga A.-M."/>
            <person name="Temple L."/>
            <person name="James K.D."/>
            <person name="Harris B."/>
            <person name="Quail M.A."/>
            <person name="Achtman M."/>
            <person name="Atkin R."/>
            <person name="Baker S."/>
            <person name="Basham D."/>
            <person name="Bason N."/>
            <person name="Cherevach I."/>
            <person name="Chillingworth T."/>
            <person name="Collins M."/>
            <person name="Cronin A."/>
            <person name="Davis P."/>
            <person name="Doggett J."/>
            <person name="Feltwell T."/>
            <person name="Goble A."/>
            <person name="Hamlin N."/>
            <person name="Hauser H."/>
            <person name="Holroyd S."/>
            <person name="Jagels K."/>
            <person name="Leather S."/>
            <person name="Moule S."/>
            <person name="Norberczak H."/>
            <person name="O'Neil S."/>
            <person name="Ormond D."/>
            <person name="Price C."/>
            <person name="Rabbinowitsch E."/>
            <person name="Rutter S."/>
            <person name="Sanders M."/>
            <person name="Saunders D."/>
            <person name="Seeger K."/>
            <person name="Sharp S."/>
            <person name="Simmonds M."/>
            <person name="Skelton J."/>
            <person name="Squares R."/>
            <person name="Squares S."/>
            <person name="Stevens K."/>
            <person name="Unwin L."/>
            <person name="Whitehead S."/>
            <person name="Barrell B.G."/>
            <person name="Maskell D.J."/>
        </authorList>
    </citation>
    <scope>NUCLEOTIDE SEQUENCE [LARGE SCALE GENOMIC DNA]</scope>
    <source>
        <strain>Tohama I / ATCC BAA-589 / NCTC 13251</strain>
    </source>
</reference>
<evidence type="ECO:0000255" key="1">
    <source>
        <dbReference type="HAMAP-Rule" id="MF_00581"/>
    </source>
</evidence>
<evidence type="ECO:0007829" key="2">
    <source>
        <dbReference type="PDB" id="5US8"/>
    </source>
</evidence>
<evidence type="ECO:0007829" key="3">
    <source>
        <dbReference type="PDB" id="6E5Y"/>
    </source>
</evidence>
<proteinExistence type="evidence at protein level"/>
<accession>Q7VTJ9</accession>
<organism>
    <name type="scientific">Bordetella pertussis (strain Tohama I / ATCC BAA-589 / NCTC 13251)</name>
    <dbReference type="NCBI Taxonomy" id="257313"/>
    <lineage>
        <taxon>Bacteria</taxon>
        <taxon>Pseudomonadati</taxon>
        <taxon>Pseudomonadota</taxon>
        <taxon>Betaproteobacteria</taxon>
        <taxon>Burkholderiales</taxon>
        <taxon>Alcaligenaceae</taxon>
        <taxon>Bordetella</taxon>
    </lineage>
</organism>
<comment type="catalytic activity">
    <reaction evidence="1">
        <text>L-citrulline + L-aspartate + ATP = 2-(N(omega)-L-arginino)succinate + AMP + diphosphate + H(+)</text>
        <dbReference type="Rhea" id="RHEA:10932"/>
        <dbReference type="ChEBI" id="CHEBI:15378"/>
        <dbReference type="ChEBI" id="CHEBI:29991"/>
        <dbReference type="ChEBI" id="CHEBI:30616"/>
        <dbReference type="ChEBI" id="CHEBI:33019"/>
        <dbReference type="ChEBI" id="CHEBI:57472"/>
        <dbReference type="ChEBI" id="CHEBI:57743"/>
        <dbReference type="ChEBI" id="CHEBI:456215"/>
        <dbReference type="EC" id="6.3.4.5"/>
    </reaction>
</comment>
<comment type="pathway">
    <text evidence="1">Amino-acid biosynthesis; L-arginine biosynthesis; L-arginine from L-ornithine and carbamoyl phosphate: step 2/3.</text>
</comment>
<comment type="subunit">
    <text evidence="1">Homotetramer.</text>
</comment>
<comment type="subcellular location">
    <subcellularLocation>
        <location evidence="1">Cytoplasm</location>
    </subcellularLocation>
</comment>
<comment type="similarity">
    <text evidence="1">Belongs to the argininosuccinate synthase family. Type 2 subfamily.</text>
</comment>
<dbReference type="EC" id="6.3.4.5" evidence="1"/>
<dbReference type="EMBL" id="BX640421">
    <property type="protein sequence ID" value="CAE43796.1"/>
    <property type="molecule type" value="Genomic_DNA"/>
</dbReference>
<dbReference type="RefSeq" id="NP_882052.1">
    <property type="nucleotide sequence ID" value="NC_002929.2"/>
</dbReference>
<dbReference type="RefSeq" id="WP_003820367.1">
    <property type="nucleotide sequence ID" value="NZ_CP039022.1"/>
</dbReference>
<dbReference type="PDB" id="5US8">
    <property type="method" value="X-ray"/>
    <property type="resolution" value="2.15 A"/>
    <property type="chains" value="A/B=1-445"/>
</dbReference>
<dbReference type="PDB" id="6E5Y">
    <property type="method" value="X-ray"/>
    <property type="resolution" value="1.50 A"/>
    <property type="chains" value="A=1-445"/>
</dbReference>
<dbReference type="PDBsum" id="5US8"/>
<dbReference type="PDBsum" id="6E5Y"/>
<dbReference type="SMR" id="Q7VTJ9"/>
<dbReference type="STRING" id="257313.BP3537"/>
<dbReference type="PaxDb" id="257313-BP3537"/>
<dbReference type="GeneID" id="69600464"/>
<dbReference type="KEGG" id="bpe:BP3537"/>
<dbReference type="PATRIC" id="fig|257313.5.peg.3829"/>
<dbReference type="eggNOG" id="COG0137">
    <property type="taxonomic scope" value="Bacteria"/>
</dbReference>
<dbReference type="HOGENOM" id="CLU_032784_4_1_4"/>
<dbReference type="UniPathway" id="UPA00068">
    <property type="reaction ID" value="UER00113"/>
</dbReference>
<dbReference type="Proteomes" id="UP000002676">
    <property type="component" value="Chromosome"/>
</dbReference>
<dbReference type="GO" id="GO:0005737">
    <property type="term" value="C:cytoplasm"/>
    <property type="evidence" value="ECO:0007669"/>
    <property type="project" value="UniProtKB-SubCell"/>
</dbReference>
<dbReference type="GO" id="GO:0004055">
    <property type="term" value="F:argininosuccinate synthase activity"/>
    <property type="evidence" value="ECO:0007669"/>
    <property type="project" value="UniProtKB-UniRule"/>
</dbReference>
<dbReference type="GO" id="GO:0005524">
    <property type="term" value="F:ATP binding"/>
    <property type="evidence" value="ECO:0007669"/>
    <property type="project" value="UniProtKB-UniRule"/>
</dbReference>
<dbReference type="GO" id="GO:0042803">
    <property type="term" value="F:protein homodimerization activity"/>
    <property type="evidence" value="ECO:0007669"/>
    <property type="project" value="InterPro"/>
</dbReference>
<dbReference type="GO" id="GO:0000053">
    <property type="term" value="P:argininosuccinate metabolic process"/>
    <property type="evidence" value="ECO:0007669"/>
    <property type="project" value="TreeGrafter"/>
</dbReference>
<dbReference type="GO" id="GO:0006526">
    <property type="term" value="P:L-arginine biosynthetic process"/>
    <property type="evidence" value="ECO:0007669"/>
    <property type="project" value="UniProtKB-UniRule"/>
</dbReference>
<dbReference type="GO" id="GO:0000050">
    <property type="term" value="P:urea cycle"/>
    <property type="evidence" value="ECO:0007669"/>
    <property type="project" value="TreeGrafter"/>
</dbReference>
<dbReference type="CDD" id="cd01999">
    <property type="entry name" value="ASS"/>
    <property type="match status" value="1"/>
</dbReference>
<dbReference type="FunFam" id="1.10.287.400:FF:000001">
    <property type="entry name" value="Argininosuccinate synthase"/>
    <property type="match status" value="1"/>
</dbReference>
<dbReference type="Gene3D" id="1.10.287.400">
    <property type="match status" value="1"/>
</dbReference>
<dbReference type="Gene3D" id="3.90.1260.10">
    <property type="entry name" value="Argininosuccinate synthetase, chain A, domain 2"/>
    <property type="match status" value="1"/>
</dbReference>
<dbReference type="Gene3D" id="3.40.50.620">
    <property type="entry name" value="HUPs"/>
    <property type="match status" value="1"/>
</dbReference>
<dbReference type="HAMAP" id="MF_00581">
    <property type="entry name" value="Arg_succ_synth_type2"/>
    <property type="match status" value="1"/>
</dbReference>
<dbReference type="InterPro" id="IPR023437">
    <property type="entry name" value="Arg_succ_synth_type2_subfam"/>
</dbReference>
<dbReference type="InterPro" id="IPR048268">
    <property type="entry name" value="Arginosuc_syn_C"/>
</dbReference>
<dbReference type="InterPro" id="IPR048267">
    <property type="entry name" value="Arginosuc_syn_N"/>
</dbReference>
<dbReference type="InterPro" id="IPR001518">
    <property type="entry name" value="Arginosuc_synth"/>
</dbReference>
<dbReference type="InterPro" id="IPR018223">
    <property type="entry name" value="Arginosuc_synth_CS"/>
</dbReference>
<dbReference type="InterPro" id="IPR023434">
    <property type="entry name" value="Arginosuc_synth_type_1_subfam"/>
</dbReference>
<dbReference type="InterPro" id="IPR024074">
    <property type="entry name" value="AS_cat/multimer_dom_body"/>
</dbReference>
<dbReference type="InterPro" id="IPR024073">
    <property type="entry name" value="AS_multimer_C_tail"/>
</dbReference>
<dbReference type="InterPro" id="IPR014729">
    <property type="entry name" value="Rossmann-like_a/b/a_fold"/>
</dbReference>
<dbReference type="NCBIfam" id="TIGR00032">
    <property type="entry name" value="argG"/>
    <property type="match status" value="1"/>
</dbReference>
<dbReference type="NCBIfam" id="NF003779">
    <property type="entry name" value="PRK05370.1"/>
    <property type="match status" value="1"/>
</dbReference>
<dbReference type="PANTHER" id="PTHR11587">
    <property type="entry name" value="ARGININOSUCCINATE SYNTHASE"/>
    <property type="match status" value="1"/>
</dbReference>
<dbReference type="PANTHER" id="PTHR11587:SF2">
    <property type="entry name" value="ARGININOSUCCINATE SYNTHASE"/>
    <property type="match status" value="1"/>
</dbReference>
<dbReference type="Pfam" id="PF20979">
    <property type="entry name" value="Arginosuc_syn_C"/>
    <property type="match status" value="1"/>
</dbReference>
<dbReference type="Pfam" id="PF00764">
    <property type="entry name" value="Arginosuc_synth"/>
    <property type="match status" value="1"/>
</dbReference>
<dbReference type="SUPFAM" id="SSF52402">
    <property type="entry name" value="Adenine nucleotide alpha hydrolases-like"/>
    <property type="match status" value="1"/>
</dbReference>
<dbReference type="SUPFAM" id="SSF69864">
    <property type="entry name" value="Argininosuccinate synthetase, C-terminal domain"/>
    <property type="match status" value="1"/>
</dbReference>
<dbReference type="PROSITE" id="PS00564">
    <property type="entry name" value="ARGININOSUCCIN_SYN_1"/>
    <property type="match status" value="1"/>
</dbReference>
<dbReference type="PROSITE" id="PS00565">
    <property type="entry name" value="ARGININOSUCCIN_SYN_2"/>
    <property type="match status" value="1"/>
</dbReference>
<protein>
    <recommendedName>
        <fullName evidence="1">Argininosuccinate synthase</fullName>
        <ecNumber evidence="1">6.3.4.5</ecNumber>
    </recommendedName>
    <alternativeName>
        <fullName evidence="1">Citrulline--aspartate ligase</fullName>
    </alternativeName>
</protein>
<gene>
    <name evidence="1" type="primary">argG</name>
    <name type="ordered locus">BP3537</name>
</gene>
<feature type="chain" id="PRO_0000148692" description="Argininosuccinate synthase">
    <location>
        <begin position="1"/>
        <end position="445"/>
    </location>
</feature>
<feature type="binding site" evidence="1">
    <location>
        <begin position="17"/>
        <end position="25"/>
    </location>
    <ligand>
        <name>ATP</name>
        <dbReference type="ChEBI" id="CHEBI:30616"/>
    </ligand>
</feature>
<feature type="binding site" evidence="1">
    <location>
        <position position="43"/>
    </location>
    <ligand>
        <name>ATP</name>
        <dbReference type="ChEBI" id="CHEBI:30616"/>
    </ligand>
</feature>
<feature type="binding site" evidence="1">
    <location>
        <position position="99"/>
    </location>
    <ligand>
        <name>L-citrulline</name>
        <dbReference type="ChEBI" id="CHEBI:57743"/>
    </ligand>
</feature>
<feature type="binding site" evidence="1">
    <location>
        <position position="129"/>
    </location>
    <ligand>
        <name>ATP</name>
        <dbReference type="ChEBI" id="CHEBI:30616"/>
    </ligand>
</feature>
<feature type="binding site" evidence="1">
    <location>
        <position position="131"/>
    </location>
    <ligand>
        <name>ATP</name>
        <dbReference type="ChEBI" id="CHEBI:30616"/>
    </ligand>
</feature>
<feature type="binding site" evidence="1">
    <location>
        <position position="131"/>
    </location>
    <ligand>
        <name>L-aspartate</name>
        <dbReference type="ChEBI" id="CHEBI:29991"/>
    </ligand>
</feature>
<feature type="binding site" evidence="1">
    <location>
        <position position="135"/>
    </location>
    <ligand>
        <name>L-aspartate</name>
        <dbReference type="ChEBI" id="CHEBI:29991"/>
    </ligand>
</feature>
<feature type="binding site" evidence="1">
    <location>
        <position position="135"/>
    </location>
    <ligand>
        <name>L-citrulline</name>
        <dbReference type="ChEBI" id="CHEBI:57743"/>
    </ligand>
</feature>
<feature type="binding site" evidence="1">
    <location>
        <position position="136"/>
    </location>
    <ligand>
        <name>ATP</name>
        <dbReference type="ChEBI" id="CHEBI:30616"/>
    </ligand>
</feature>
<feature type="binding site" evidence="1">
    <location>
        <position position="136"/>
    </location>
    <ligand>
        <name>L-aspartate</name>
        <dbReference type="ChEBI" id="CHEBI:29991"/>
    </ligand>
</feature>
<feature type="binding site" evidence="1">
    <location>
        <position position="139"/>
    </location>
    <ligand>
        <name>L-citrulline</name>
        <dbReference type="ChEBI" id="CHEBI:57743"/>
    </ligand>
</feature>
<feature type="binding site" evidence="1">
    <location>
        <position position="192"/>
    </location>
    <ligand>
        <name>L-citrulline</name>
        <dbReference type="ChEBI" id="CHEBI:57743"/>
    </ligand>
</feature>
<feature type="binding site" evidence="1">
    <location>
        <position position="194"/>
    </location>
    <ligand>
        <name>ATP</name>
        <dbReference type="ChEBI" id="CHEBI:30616"/>
    </ligand>
</feature>
<feature type="binding site" evidence="1">
    <location>
        <position position="201"/>
    </location>
    <ligand>
        <name>L-citrulline</name>
        <dbReference type="ChEBI" id="CHEBI:57743"/>
    </ligand>
</feature>
<feature type="binding site" evidence="1">
    <location>
        <position position="203"/>
    </location>
    <ligand>
        <name>L-citrulline</name>
        <dbReference type="ChEBI" id="CHEBI:57743"/>
    </ligand>
</feature>
<feature type="binding site" evidence="1">
    <location>
        <position position="280"/>
    </location>
    <ligand>
        <name>L-citrulline</name>
        <dbReference type="ChEBI" id="CHEBI:57743"/>
    </ligand>
</feature>
<feature type="strand" evidence="3">
    <location>
        <begin position="12"/>
        <end position="17"/>
    </location>
</feature>
<feature type="helix" evidence="3">
    <location>
        <begin position="22"/>
        <end position="33"/>
    </location>
</feature>
<feature type="strand" evidence="3">
    <location>
        <begin position="37"/>
        <end position="44"/>
    </location>
</feature>
<feature type="helix" evidence="3">
    <location>
        <begin position="55"/>
        <end position="63"/>
    </location>
</feature>
<feature type="strand" evidence="3">
    <location>
        <begin position="68"/>
        <end position="72"/>
    </location>
</feature>
<feature type="helix" evidence="3">
    <location>
        <begin position="74"/>
        <end position="86"/>
    </location>
</feature>
<feature type="strand" evidence="2">
    <location>
        <begin position="92"/>
        <end position="94"/>
    </location>
</feature>
<feature type="strand" evidence="2">
    <location>
        <begin position="97"/>
        <end position="99"/>
    </location>
</feature>
<feature type="helix" evidence="3">
    <location>
        <begin position="102"/>
        <end position="120"/>
    </location>
</feature>
<feature type="strand" evidence="3">
    <location>
        <begin position="125"/>
        <end position="127"/>
    </location>
</feature>
<feature type="helix" evidence="3">
    <location>
        <begin position="136"/>
        <end position="147"/>
    </location>
</feature>
<feature type="strand" evidence="3">
    <location>
        <begin position="152"/>
        <end position="154"/>
    </location>
</feature>
<feature type="helix" evidence="3">
    <location>
        <begin position="156"/>
        <end position="158"/>
    </location>
</feature>
<feature type="helix" evidence="3">
    <location>
        <begin position="160"/>
        <end position="165"/>
    </location>
</feature>
<feature type="strand" evidence="3">
    <location>
        <begin position="166"/>
        <end position="168"/>
    </location>
</feature>
<feature type="helix" evidence="3">
    <location>
        <begin position="169"/>
        <end position="178"/>
    </location>
</feature>
<feature type="strand" evidence="3">
    <location>
        <begin position="190"/>
        <end position="196"/>
    </location>
</feature>
<feature type="strand" evidence="3">
    <location>
        <begin position="199"/>
        <end position="204"/>
    </location>
</feature>
<feature type="helix" evidence="3">
    <location>
        <begin position="205"/>
        <end position="208"/>
    </location>
</feature>
<feature type="helix" evidence="3">
    <location>
        <begin position="214"/>
        <end position="216"/>
    </location>
</feature>
<feature type="strand" evidence="3">
    <location>
        <begin position="220"/>
        <end position="222"/>
    </location>
</feature>
<feature type="strand" evidence="3">
    <location>
        <begin position="235"/>
        <end position="242"/>
    </location>
</feature>
<feature type="strand" evidence="3">
    <location>
        <begin position="245"/>
        <end position="249"/>
    </location>
</feature>
<feature type="helix" evidence="3">
    <location>
        <begin position="257"/>
        <end position="269"/>
    </location>
</feature>
<feature type="turn" evidence="3">
    <location>
        <begin position="270"/>
        <end position="274"/>
    </location>
</feature>
<feature type="strand" evidence="3">
    <location>
        <begin position="276"/>
        <end position="281"/>
    </location>
</feature>
<feature type="strand" evidence="3">
    <location>
        <begin position="287"/>
        <end position="293"/>
    </location>
</feature>
<feature type="helix" evidence="3">
    <location>
        <begin position="295"/>
        <end position="311"/>
    </location>
</feature>
<feature type="helix" evidence="3">
    <location>
        <begin position="314"/>
        <end position="332"/>
    </location>
</feature>
<feature type="helix" evidence="3">
    <location>
        <begin position="339"/>
        <end position="351"/>
    </location>
</feature>
<feature type="helix" evidence="3">
    <location>
        <begin position="353"/>
        <end position="355"/>
    </location>
</feature>
<feature type="strand" evidence="3">
    <location>
        <begin position="358"/>
        <end position="364"/>
    </location>
</feature>
<feature type="strand" evidence="3">
    <location>
        <begin position="370"/>
        <end position="376"/>
    </location>
</feature>
<feature type="helix" evidence="3">
    <location>
        <begin position="384"/>
        <end position="387"/>
    </location>
</feature>
<feature type="turn" evidence="3">
    <location>
        <begin position="392"/>
        <end position="394"/>
    </location>
</feature>
<feature type="helix" evidence="3">
    <location>
        <begin position="399"/>
        <end position="407"/>
    </location>
</feature>
<feature type="helix" evidence="3">
    <location>
        <begin position="410"/>
        <end position="425"/>
    </location>
</feature>
<feature type="strand" evidence="3">
    <location>
        <begin position="428"/>
        <end position="430"/>
    </location>
</feature>
<name>ASSY_BORPE</name>
<sequence length="445" mass="49323">MTTILPNLPTGQKVGIAFSGGLDTSAALLWMRQKGAVPYAYTANLGQPDEPDYDEIPRRAMQYGAEAARLVDCRAQLVAEGIAALQAGAFHISTAGLTYFNTTPIGRAVTGTMLVAAMKEDGVNIWGDGSTFKGNDIERFYRYGLLTNPDLKIYKPWLDQTFIDELGGRAEMSEYMRQAGFDYKMSAEKAYSTDSNMLGATHEAKDLELLSAGIRIVQPIMGVAFWQDSVQIKAEEVTVRFEEGQPVALNGVEYADPVELLLEANRIGGRHGLGMSDQIENRIIEAKSRGIYEAPGLALLFIAYERLVTGIHNEDTIEQYRENGRKLGRLLYQGRWFDPQAIMLRETAQRWVARAITGEVTLELRRGNDYSLLNTESANLTYAPERLSMEKVENAPFTPADRIGQLTMRNLDIVDTREKLFTYVKTGLLAPSAGSALPQIKDGKK</sequence>